<comment type="function">
    <text evidence="2 3">Acyltransferase which catalyzes the transfer of an acyl group from an acyl-CoA to a lysophospholipid leading to the production of a phospholipid and participates in the reacylation step of the phospholipid remodeling pathway also known as the Lands cycle. May catalyze preferentially the acylation of lysophosphatidylethanolamine (1-acyl-sn-glycero-3-phosphoethanolamine or LPE) and lysophosphatidic acid (LPA) and to a lesser extend lysophosphatidylcholine (LPC) and lysophosphatidylserine (LPS). Prefers oleoyl-CoA as the acyl donor (By similarity). May be involved in chondrocyte differentiation (By similarity).</text>
</comment>
<comment type="catalytic activity">
    <reaction evidence="2">
        <text>a 1-acyl-sn-glycero-3-phosphocholine + an acyl-CoA = a 1,2-diacyl-sn-glycero-3-phosphocholine + CoA</text>
        <dbReference type="Rhea" id="RHEA:12937"/>
        <dbReference type="ChEBI" id="CHEBI:57287"/>
        <dbReference type="ChEBI" id="CHEBI:57643"/>
        <dbReference type="ChEBI" id="CHEBI:58168"/>
        <dbReference type="ChEBI" id="CHEBI:58342"/>
        <dbReference type="EC" id="2.3.1.23"/>
    </reaction>
    <physiologicalReaction direction="left-to-right" evidence="2">
        <dbReference type="Rhea" id="RHEA:12938"/>
    </physiologicalReaction>
</comment>
<comment type="catalytic activity">
    <reaction evidence="2">
        <text>a 1-acyl-sn-glycero-3-phosphoethanolamine + an acyl-CoA = a 1,2-diacyl-sn-glycero-3-phosphoethanolamine + CoA</text>
        <dbReference type="Rhea" id="RHEA:32995"/>
        <dbReference type="ChEBI" id="CHEBI:57287"/>
        <dbReference type="ChEBI" id="CHEBI:58342"/>
        <dbReference type="ChEBI" id="CHEBI:64381"/>
        <dbReference type="ChEBI" id="CHEBI:64612"/>
        <dbReference type="EC" id="2.3.1.n7"/>
    </reaction>
    <physiologicalReaction direction="left-to-right" evidence="2">
        <dbReference type="Rhea" id="RHEA:32996"/>
    </physiologicalReaction>
</comment>
<comment type="catalytic activity">
    <reaction evidence="2">
        <text>a 1-acyl-sn-glycero-3-phosphate + an acyl-CoA = a 1,2-diacyl-sn-glycero-3-phosphate + CoA</text>
        <dbReference type="Rhea" id="RHEA:19709"/>
        <dbReference type="ChEBI" id="CHEBI:57287"/>
        <dbReference type="ChEBI" id="CHEBI:57970"/>
        <dbReference type="ChEBI" id="CHEBI:58342"/>
        <dbReference type="ChEBI" id="CHEBI:58608"/>
        <dbReference type="EC" id="2.3.1.51"/>
    </reaction>
    <physiologicalReaction direction="left-to-right" evidence="2">
        <dbReference type="Rhea" id="RHEA:19710"/>
    </physiologicalReaction>
</comment>
<comment type="catalytic activity">
    <reaction evidence="2">
        <text>(9Z)-hexadecenoyl-CoA + 1-hexadecanoyl-sn-glycero-3-phosphocholine = 1-hexadecanoyl-2-(9Z-hexadecenoyl)-sn-glycero-3-phosphocholine + CoA</text>
        <dbReference type="Rhea" id="RHEA:37207"/>
        <dbReference type="ChEBI" id="CHEBI:57287"/>
        <dbReference type="ChEBI" id="CHEBI:61540"/>
        <dbReference type="ChEBI" id="CHEBI:72998"/>
        <dbReference type="ChEBI" id="CHEBI:74000"/>
    </reaction>
    <physiologicalReaction direction="left-to-right" evidence="2">
        <dbReference type="Rhea" id="RHEA:37208"/>
    </physiologicalReaction>
</comment>
<comment type="catalytic activity">
    <reaction evidence="2">
        <text>1-hexadecanoyl-sn-glycero-3-phosphoethanolamine + (9Z)-octadecenoyl-CoA = 1-hexadecanoyl-2-(9Z-octadecenoyl)-sn-glycero-3-phosphoethanolamine + CoA</text>
        <dbReference type="Rhea" id="RHEA:36015"/>
        <dbReference type="ChEBI" id="CHEBI:57287"/>
        <dbReference type="ChEBI" id="CHEBI:57387"/>
        <dbReference type="ChEBI" id="CHEBI:73004"/>
        <dbReference type="ChEBI" id="CHEBI:73007"/>
    </reaction>
    <physiologicalReaction direction="left-to-right" evidence="2">
        <dbReference type="Rhea" id="RHEA:36016"/>
    </physiologicalReaction>
</comment>
<comment type="catalytic activity">
    <reaction evidence="2">
        <text>1-hexadecanoyl-sn-glycero-3-phosphoethanolamine + (9Z)-hexadecenoyl-CoA = 1-hexadecanoyl-2-(9Z)-hexadecenoyl-sn-glycero-3-phosphoethanolamine + CoA</text>
        <dbReference type="Rhea" id="RHEA:37419"/>
        <dbReference type="ChEBI" id="CHEBI:57287"/>
        <dbReference type="ChEBI" id="CHEBI:61540"/>
        <dbReference type="ChEBI" id="CHEBI:73004"/>
        <dbReference type="ChEBI" id="CHEBI:73999"/>
    </reaction>
    <physiologicalReaction direction="left-to-right" evidence="2">
        <dbReference type="Rhea" id="RHEA:37420"/>
    </physiologicalReaction>
</comment>
<comment type="catalytic activity">
    <reaction evidence="2">
        <text>1-(9Z-octadecenoyl)-sn-glycero-3-phospho-L-serine + hexadecanoyl-CoA = 1-(9Z)-octadecenoyl-2-hexadecanoyl-sn-glycero-3-phosphoserine + CoA</text>
        <dbReference type="Rhea" id="RHEA:37415"/>
        <dbReference type="ChEBI" id="CHEBI:57287"/>
        <dbReference type="ChEBI" id="CHEBI:57379"/>
        <dbReference type="ChEBI" id="CHEBI:74617"/>
        <dbReference type="ChEBI" id="CHEBI:74909"/>
    </reaction>
    <physiologicalReaction direction="left-to-right" evidence="2">
        <dbReference type="Rhea" id="RHEA:37416"/>
    </physiologicalReaction>
</comment>
<comment type="catalytic activity">
    <reaction evidence="2">
        <text>(9Z,12Z)-octadecadienoyl-CoA + 1-hexadecanoyl-sn-glycero-3-phosphocholine = 1-hexadecanoyl-2-(9Z,12Z-octadecadienoyl)-sn-glycero-3-phosphocholine + CoA</text>
        <dbReference type="Rhea" id="RHEA:35995"/>
        <dbReference type="ChEBI" id="CHEBI:57287"/>
        <dbReference type="ChEBI" id="CHEBI:57383"/>
        <dbReference type="ChEBI" id="CHEBI:72998"/>
        <dbReference type="ChEBI" id="CHEBI:73002"/>
    </reaction>
    <physiologicalReaction direction="left-to-right" evidence="2">
        <dbReference type="Rhea" id="RHEA:35996"/>
    </physiologicalReaction>
</comment>
<comment type="catalytic activity">
    <reaction evidence="2">
        <text>1-hexadecanoyl-sn-glycero-3-phosphocholine + (9Z)-octadecenoyl-CoA = 1-hexadecanoyl-2-(9Z-octadecenoyl)-sn-glycero-3-phosphocholine + CoA</text>
        <dbReference type="Rhea" id="RHEA:35991"/>
        <dbReference type="ChEBI" id="CHEBI:57287"/>
        <dbReference type="ChEBI" id="CHEBI:57387"/>
        <dbReference type="ChEBI" id="CHEBI:72998"/>
        <dbReference type="ChEBI" id="CHEBI:73001"/>
    </reaction>
    <physiologicalReaction direction="left-to-right" evidence="2">
        <dbReference type="Rhea" id="RHEA:35992"/>
    </physiologicalReaction>
</comment>
<comment type="catalytic activity">
    <reaction evidence="2">
        <text>1-hexadecanoyl-sn-glycero-3-phosphate + (9Z)-hexadecenoyl-CoA = 1-hexadecanoyl-2-[(9Z)-hexadec-9-enoyl]-sn-glycero-3-phosphate + CoA</text>
        <dbReference type="Rhea" id="RHEA:37223"/>
        <dbReference type="ChEBI" id="CHEBI:57287"/>
        <dbReference type="ChEBI" id="CHEBI:57518"/>
        <dbReference type="ChEBI" id="CHEBI:61540"/>
        <dbReference type="ChEBI" id="CHEBI:73998"/>
    </reaction>
    <physiologicalReaction direction="left-to-right" evidence="2">
        <dbReference type="Rhea" id="RHEA:37224"/>
    </physiologicalReaction>
</comment>
<comment type="catalytic activity">
    <reaction evidence="2">
        <text>1-hexadecanoyl-sn-glycero-3-phosphate + (9Z)-octadecenoyl-CoA = 1-hexadecanoyl-2-(9Z-octadecenoyl)-sn-glycero-3-phosphate + CoA</text>
        <dbReference type="Rhea" id="RHEA:33187"/>
        <dbReference type="ChEBI" id="CHEBI:57287"/>
        <dbReference type="ChEBI" id="CHEBI:57387"/>
        <dbReference type="ChEBI" id="CHEBI:57518"/>
        <dbReference type="ChEBI" id="CHEBI:64839"/>
    </reaction>
    <physiologicalReaction direction="left-to-right" evidence="2">
        <dbReference type="Rhea" id="RHEA:33188"/>
    </physiologicalReaction>
</comment>
<comment type="catalytic activity">
    <reaction evidence="3">
        <text>a 1-O-(1Z-alkenyl)-sn-glycero-3-phosphocholine + (9Z)-octadecenoyl-CoA = 1-O-(1Z)-alkenyl-2-(9Z)-octadecenoyl-sn-glycero-3-phosphocholine + CoA</text>
        <dbReference type="Rhea" id="RHEA:37627"/>
        <dbReference type="ChEBI" id="CHEBI:57287"/>
        <dbReference type="ChEBI" id="CHEBI:57387"/>
        <dbReference type="ChEBI" id="CHEBI:77287"/>
        <dbReference type="ChEBI" id="CHEBI:77294"/>
    </reaction>
    <physiologicalReaction direction="left-to-right" evidence="3">
        <dbReference type="Rhea" id="RHEA:37628"/>
    </physiologicalReaction>
</comment>
<comment type="catalytic activity">
    <reaction evidence="3">
        <text>a 1-O-(1Z-alkenyl)-sn-glycero-3-phosphoethanolamine + (9Z)-octadecenoyl-CoA = 1-O-(1Z)-alkenyl-2-(9Z)-octadecenoyl-sn-glycero-3-phosphoethanolamine + CoA</text>
        <dbReference type="Rhea" id="RHEA:37631"/>
        <dbReference type="ChEBI" id="CHEBI:57287"/>
        <dbReference type="ChEBI" id="CHEBI:57387"/>
        <dbReference type="ChEBI" id="CHEBI:77288"/>
        <dbReference type="ChEBI" id="CHEBI:77291"/>
    </reaction>
    <physiologicalReaction direction="left-to-right" evidence="3">
        <dbReference type="Rhea" id="RHEA:37632"/>
    </physiologicalReaction>
</comment>
<comment type="catalytic activity">
    <reaction evidence="3">
        <text>1-octadecanoyl-sn-glycero-3-phosphoethanolamine + (9Z)-octadecenoyl-CoA = 1-octadecanoyl-2-(9Z-octadecenoyl)-sn-glycero-3-phosphoethanolamine + CoA</text>
        <dbReference type="Rhea" id="RHEA:37523"/>
        <dbReference type="ChEBI" id="CHEBI:57287"/>
        <dbReference type="ChEBI" id="CHEBI:57387"/>
        <dbReference type="ChEBI" id="CHEBI:75036"/>
        <dbReference type="ChEBI" id="CHEBI:75038"/>
    </reaction>
    <physiologicalReaction direction="left-to-right" evidence="3">
        <dbReference type="Rhea" id="RHEA:37524"/>
    </physiologicalReaction>
</comment>
<comment type="catalytic activity">
    <reaction evidence="3">
        <text>1-octadecanoyl-sn-glycero-3-phosphocholine + (9Z)-octadecenoyl-CoA = 1-octadecanoyl-2-(9Z-octadecenoyl)-sn-glycero-3-phosphocholine + CoA</text>
        <dbReference type="Rhea" id="RHEA:37519"/>
        <dbReference type="ChEBI" id="CHEBI:57287"/>
        <dbReference type="ChEBI" id="CHEBI:57387"/>
        <dbReference type="ChEBI" id="CHEBI:73858"/>
        <dbReference type="ChEBI" id="CHEBI:75034"/>
    </reaction>
    <physiologicalReaction direction="left-to-right" evidence="3">
        <dbReference type="Rhea" id="RHEA:37520"/>
    </physiologicalReaction>
</comment>
<comment type="catalytic activity">
    <reaction evidence="3">
        <text>1-(9Z-octadecenoyl)-sn-glycero-3-phosphoethanolamine + (9Z)-octadecenoyl-CoA = 1,2-di-(9Z-octadecenoyl)-sn-glycero-3-phosphoethanolamine + CoA</text>
        <dbReference type="Rhea" id="RHEA:37499"/>
        <dbReference type="ChEBI" id="CHEBI:57287"/>
        <dbReference type="ChEBI" id="CHEBI:57387"/>
        <dbReference type="ChEBI" id="CHEBI:74971"/>
        <dbReference type="ChEBI" id="CHEBI:74986"/>
    </reaction>
    <physiologicalReaction direction="left-to-right" evidence="3">
        <dbReference type="Rhea" id="RHEA:37500"/>
    </physiologicalReaction>
</comment>
<comment type="activity regulation">
    <text evidence="2">Partially inhibited by thimerosal.</text>
</comment>
<comment type="pathway">
    <text evidence="2">Lipid metabolism; phospholipid metabolism.</text>
</comment>
<comment type="subcellular location">
    <subcellularLocation>
        <location evidence="3">Endoplasmic reticulum membrane</location>
        <topology evidence="4">Multi-pass membrane protein</topology>
    </subcellularLocation>
</comment>
<comment type="similarity">
    <text evidence="5">Belongs to the membrane-bound acyltransferase family.</text>
</comment>
<comment type="sequence caution" evidence="5">
    <conflict type="frameshift">
        <sequence resource="EMBL" id="BC101889"/>
    </conflict>
</comment>
<sequence length="519" mass="59001">MATTSTTGSTLLQPLSNAVQLPIDQVNFVVCQLFALLAAVWFRTYLHSSKTSSFIRHVVATLLGLYLAFFCFGWYALHFLVQSGISYCIMIIAGVESMHQCCFVFALGYLSVCQITRVYIFDYGQYSADFSGPMMIITQKITSLAYEIHDGMFRKDEELTPSQRGLAVRRMPSLLEYVSYTCNFMGILAGPLCSYKDYIAFIEGRASHMAQSGENGKEEQHGKAEPSPNAAVTEKLLVCGLSLLFHLTISSMLPVEYNIDEHFQATASWPTKATYLYVSLLAARPKYYFAWTLADAINNAAGFGFRGYDKNGVARWDLISNLRIQQIEMSTSFKMFLDNWNIQTALWLKRVCYERATFSPTVQTFFLSAIWHGVYPGYYLTFLTGVLMTLAARAVRNNFRHYFVEPPQLKLFYDIITWAATQITISYTVVPFVLLSINPSFTFYRSWYYCLHICSILVLLLLPVKKSPRKKNTEENAQPSWAKKFDERENSLGQNSFSMMNNVCNQNQDTGSRHSALTQ</sequence>
<feature type="chain" id="PRO_0000273022" description="Membrane-bound glycerophospholipid O-acyltransferase 2">
    <location>
        <begin position="1"/>
        <end position="519"/>
    </location>
</feature>
<feature type="transmembrane region" description="Helical" evidence="4">
    <location>
        <begin position="22"/>
        <end position="42"/>
    </location>
</feature>
<feature type="transmembrane region" description="Helical" evidence="4">
    <location>
        <begin position="61"/>
        <end position="81"/>
    </location>
</feature>
<feature type="transmembrane region" description="Helical" evidence="4">
    <location>
        <begin position="88"/>
        <end position="108"/>
    </location>
</feature>
<feature type="transmembrane region" description="Helical" evidence="4">
    <location>
        <begin position="184"/>
        <end position="204"/>
    </location>
</feature>
<feature type="transmembrane region" description="Helical" evidence="4">
    <location>
        <begin position="236"/>
        <end position="256"/>
    </location>
</feature>
<feature type="transmembrane region" description="Helical" evidence="4">
    <location>
        <begin position="288"/>
        <end position="305"/>
    </location>
</feature>
<feature type="transmembrane region" description="Helical" evidence="4">
    <location>
        <begin position="365"/>
        <end position="385"/>
    </location>
</feature>
<feature type="transmembrane region" description="Helical" evidence="4">
    <location>
        <begin position="415"/>
        <end position="435"/>
    </location>
</feature>
<feature type="transmembrane region" description="Helical" evidence="4">
    <location>
        <begin position="443"/>
        <end position="463"/>
    </location>
</feature>
<feature type="active site" evidence="1">
    <location>
        <position position="341"/>
    </location>
</feature>
<feature type="active site" evidence="1">
    <location>
        <position position="372"/>
    </location>
</feature>
<gene>
    <name evidence="6" type="primary">Mboat2</name>
    <name type="synonym">Oact2</name>
</gene>
<organism>
    <name type="scientific">Rattus norvegicus</name>
    <name type="common">Rat</name>
    <dbReference type="NCBI Taxonomy" id="10116"/>
    <lineage>
        <taxon>Eukaryota</taxon>
        <taxon>Metazoa</taxon>
        <taxon>Chordata</taxon>
        <taxon>Craniata</taxon>
        <taxon>Vertebrata</taxon>
        <taxon>Euteleostomi</taxon>
        <taxon>Mammalia</taxon>
        <taxon>Eutheria</taxon>
        <taxon>Euarchontoglires</taxon>
        <taxon>Glires</taxon>
        <taxon>Rodentia</taxon>
        <taxon>Myomorpha</taxon>
        <taxon>Muroidea</taxon>
        <taxon>Muridae</taxon>
        <taxon>Murinae</taxon>
        <taxon>Rattus</taxon>
    </lineage>
</organism>
<proteinExistence type="evidence at transcript level"/>
<protein>
    <recommendedName>
        <fullName evidence="2">Membrane-bound glycerophospholipid O-acyltransferase 2</fullName>
        <ecNumber evidence="2">2.3.1.-</ecNumber>
    </recommendedName>
    <alternativeName>
        <fullName>1-acylglycerophosphate O-acyltransferase</fullName>
        <ecNumber evidence="2">2.3.1.51</ecNumber>
    </alternativeName>
    <alternativeName>
        <fullName evidence="2">1-acylglycerophosphocholine O-acyltransferase</fullName>
        <ecNumber evidence="2">2.3.1.23</ecNumber>
    </alternativeName>
    <alternativeName>
        <fullName evidence="2">1-acylglycerophosphoethanolamine O-acyltransferase</fullName>
        <ecNumber evidence="2">2.3.1.n7</ecNumber>
    </alternativeName>
    <alternativeName>
        <fullName>Lysophosphatidic acid acyltransferase</fullName>
        <shortName>LPAAT</shortName>
        <shortName>Lyso-PA acyltransferase</shortName>
    </alternativeName>
    <alternativeName>
        <fullName>Lysophosphatidylcholine acyltransferase</fullName>
        <shortName>LPCAT</shortName>
        <shortName>Lyso-PC acyltransferase</shortName>
    </alternativeName>
    <alternativeName>
        <fullName>Lysophosphatidylcholine acyltransferase 4</fullName>
        <shortName>Lyso-PC acyltransferase 4</shortName>
    </alternativeName>
    <alternativeName>
        <fullName>Lysophosphatidylethanolamine acyltransferase</fullName>
        <shortName>LPEAT</shortName>
        <shortName>Lyso-PE acyltransferase</shortName>
    </alternativeName>
    <alternativeName>
        <fullName evidence="2">Lysophospholipid acyltransferase 2</fullName>
        <shortName>LPLAT 2</shortName>
    </alternativeName>
    <alternativeName>
        <fullName>Membrane-bound O-acyltransferase domain-containing protein 2</fullName>
        <shortName>O-acyltransferase domain-containing protein 2</shortName>
    </alternativeName>
</protein>
<dbReference type="EC" id="2.3.1.-" evidence="2"/>
<dbReference type="EC" id="2.3.1.51" evidence="2"/>
<dbReference type="EC" id="2.3.1.23" evidence="2"/>
<dbReference type="EC" id="2.3.1.n7" evidence="2"/>
<dbReference type="EMBL" id="AABR03049793">
    <property type="status" value="NOT_ANNOTATED_CDS"/>
    <property type="molecule type" value="Genomic_DNA"/>
</dbReference>
<dbReference type="EMBL" id="AABR03054282">
    <property type="status" value="NOT_ANNOTATED_CDS"/>
    <property type="molecule type" value="Genomic_DNA"/>
</dbReference>
<dbReference type="EMBL" id="AABR03052483">
    <property type="status" value="NOT_ANNOTATED_CDS"/>
    <property type="molecule type" value="Genomic_DNA"/>
</dbReference>
<dbReference type="EMBL" id="AABR03050975">
    <property type="status" value="NOT_ANNOTATED_CDS"/>
    <property type="molecule type" value="Genomic_DNA"/>
</dbReference>
<dbReference type="EMBL" id="AABR03049616">
    <property type="status" value="NOT_ANNOTATED_CDS"/>
    <property type="molecule type" value="Genomic_DNA"/>
</dbReference>
<dbReference type="EMBL" id="BC101889">
    <property type="status" value="NOT_ANNOTATED_CDS"/>
    <property type="molecule type" value="mRNA"/>
</dbReference>
<dbReference type="RefSeq" id="NP_001101486.2">
    <property type="nucleotide sequence ID" value="NM_001108016.3"/>
</dbReference>
<dbReference type="SMR" id="Q3T1J2"/>
<dbReference type="FunCoup" id="Q3T1J2">
    <property type="interactions" value="2546"/>
</dbReference>
<dbReference type="STRING" id="10116.ENSRNOP00000075292"/>
<dbReference type="PhosphoSitePlus" id="Q3T1J2"/>
<dbReference type="PaxDb" id="10116-ENSRNOP00000009018"/>
<dbReference type="Ensembl" id="ENSRNOT00000082657.2">
    <property type="protein sequence ID" value="ENSRNOP00000075292.1"/>
    <property type="gene ID" value="ENSRNOG00000061050.2"/>
</dbReference>
<dbReference type="GeneID" id="313997"/>
<dbReference type="KEGG" id="rno:313997"/>
<dbReference type="AGR" id="RGD:1305798"/>
<dbReference type="CTD" id="129642"/>
<dbReference type="RGD" id="1305798">
    <property type="gene designation" value="Mboat2"/>
</dbReference>
<dbReference type="eggNOG" id="KOG2704">
    <property type="taxonomic scope" value="Eukaryota"/>
</dbReference>
<dbReference type="GeneTree" id="ENSGT01030000234564"/>
<dbReference type="HOGENOM" id="CLU_011340_3_0_1"/>
<dbReference type="InParanoid" id="Q3T1J2"/>
<dbReference type="OMA" id="WHGTRPG"/>
<dbReference type="OrthoDB" id="286734at2759"/>
<dbReference type="PhylomeDB" id="Q3T1J2"/>
<dbReference type="TreeFam" id="TF314906"/>
<dbReference type="Reactome" id="R-RNO-1482788">
    <property type="pathway name" value="Acyl chain remodelling of PC"/>
</dbReference>
<dbReference type="Reactome" id="R-RNO-1482839">
    <property type="pathway name" value="Acyl chain remodelling of PE"/>
</dbReference>
<dbReference type="UniPathway" id="UPA00085"/>
<dbReference type="PRO" id="PR:Q3T1J2"/>
<dbReference type="Proteomes" id="UP000002494">
    <property type="component" value="Chromosome 6"/>
</dbReference>
<dbReference type="Bgee" id="ENSRNOG00000061050">
    <property type="expression patterns" value="Expressed in esophagus and 16 other cell types or tissues"/>
</dbReference>
<dbReference type="GO" id="GO:0005789">
    <property type="term" value="C:endoplasmic reticulum membrane"/>
    <property type="evidence" value="ECO:0000250"/>
    <property type="project" value="UniProtKB"/>
</dbReference>
<dbReference type="GO" id="GO:0016020">
    <property type="term" value="C:membrane"/>
    <property type="evidence" value="ECO:0000318"/>
    <property type="project" value="GO_Central"/>
</dbReference>
<dbReference type="GO" id="GO:0003841">
    <property type="term" value="F:1-acylglycerol-3-phosphate O-acyltransferase activity"/>
    <property type="evidence" value="ECO:0007669"/>
    <property type="project" value="UniProtKB-EC"/>
</dbReference>
<dbReference type="GO" id="GO:0047184">
    <property type="term" value="F:1-acylglycerophosphocholine O-acyltransferase activity"/>
    <property type="evidence" value="ECO:0000250"/>
    <property type="project" value="UniProtKB"/>
</dbReference>
<dbReference type="GO" id="GO:0106262">
    <property type="term" value="F:1-acylglycerophosphoethanolamine O-acyltransferase activity"/>
    <property type="evidence" value="ECO:0000250"/>
    <property type="project" value="UniProtKB"/>
</dbReference>
<dbReference type="GO" id="GO:0106263">
    <property type="term" value="F:1-acylglycerophosphoserine O-acyltransferase activity"/>
    <property type="evidence" value="ECO:0000250"/>
    <property type="project" value="UniProtKB"/>
</dbReference>
<dbReference type="GO" id="GO:0016746">
    <property type="term" value="F:acyltransferase activity"/>
    <property type="evidence" value="ECO:0000318"/>
    <property type="project" value="GO_Central"/>
</dbReference>
<dbReference type="GO" id="GO:0030258">
    <property type="term" value="P:lipid modification"/>
    <property type="evidence" value="ECO:0000318"/>
    <property type="project" value="GO_Central"/>
</dbReference>
<dbReference type="GO" id="GO:0036151">
    <property type="term" value="P:phosphatidylcholine acyl-chain remodeling"/>
    <property type="evidence" value="ECO:0000250"/>
    <property type="project" value="UniProtKB"/>
</dbReference>
<dbReference type="GO" id="GO:0036152">
    <property type="term" value="P:phosphatidylethanolamine acyl-chain remodeling"/>
    <property type="evidence" value="ECO:0000250"/>
    <property type="project" value="UniProtKB"/>
</dbReference>
<dbReference type="GO" id="GO:0036150">
    <property type="term" value="P:phosphatidylserine acyl-chain remodeling"/>
    <property type="evidence" value="ECO:0000250"/>
    <property type="project" value="UniProtKB"/>
</dbReference>
<dbReference type="GO" id="GO:0008654">
    <property type="term" value="P:phospholipid biosynthetic process"/>
    <property type="evidence" value="ECO:0007669"/>
    <property type="project" value="UniProtKB-KW"/>
</dbReference>
<dbReference type="GO" id="GO:0032330">
    <property type="term" value="P:regulation of chondrocyte differentiation"/>
    <property type="evidence" value="ECO:0000250"/>
    <property type="project" value="UniProtKB"/>
</dbReference>
<dbReference type="InterPro" id="IPR049941">
    <property type="entry name" value="LPLAT_7/PORCN-like"/>
</dbReference>
<dbReference type="InterPro" id="IPR004299">
    <property type="entry name" value="MBOAT_fam"/>
</dbReference>
<dbReference type="PANTHER" id="PTHR13906:SF7">
    <property type="entry name" value="LYSOPHOSPHOLIPID ACYLTRANSFERASE 2"/>
    <property type="match status" value="1"/>
</dbReference>
<dbReference type="PANTHER" id="PTHR13906">
    <property type="entry name" value="PORCUPINE"/>
    <property type="match status" value="1"/>
</dbReference>
<dbReference type="Pfam" id="PF03062">
    <property type="entry name" value="MBOAT"/>
    <property type="match status" value="1"/>
</dbReference>
<keyword id="KW-0012">Acyltransferase</keyword>
<keyword id="KW-0256">Endoplasmic reticulum</keyword>
<keyword id="KW-0444">Lipid biosynthesis</keyword>
<keyword id="KW-0443">Lipid metabolism</keyword>
<keyword id="KW-0472">Membrane</keyword>
<keyword id="KW-0594">Phospholipid biosynthesis</keyword>
<keyword id="KW-1208">Phospholipid metabolism</keyword>
<keyword id="KW-1185">Reference proteome</keyword>
<keyword id="KW-0808">Transferase</keyword>
<keyword id="KW-0812">Transmembrane</keyword>
<keyword id="KW-1133">Transmembrane helix</keyword>
<accession>Q3T1J2</accession>
<name>MBOA2_RAT</name>
<reference key="1">
    <citation type="journal article" date="2004" name="Nature">
        <title>Genome sequence of the Brown Norway rat yields insights into mammalian evolution.</title>
        <authorList>
            <person name="Gibbs R.A."/>
            <person name="Weinstock G.M."/>
            <person name="Metzker M.L."/>
            <person name="Muzny D.M."/>
            <person name="Sodergren E.J."/>
            <person name="Scherer S."/>
            <person name="Scott G."/>
            <person name="Steffen D."/>
            <person name="Worley K.C."/>
            <person name="Burch P.E."/>
            <person name="Okwuonu G."/>
            <person name="Hines S."/>
            <person name="Lewis L."/>
            <person name="Deramo C."/>
            <person name="Delgado O."/>
            <person name="Dugan-Rocha S."/>
            <person name="Miner G."/>
            <person name="Morgan M."/>
            <person name="Hawes A."/>
            <person name="Gill R."/>
            <person name="Holt R.A."/>
            <person name="Adams M.D."/>
            <person name="Amanatides P.G."/>
            <person name="Baden-Tillson H."/>
            <person name="Barnstead M."/>
            <person name="Chin S."/>
            <person name="Evans C.A."/>
            <person name="Ferriera S."/>
            <person name="Fosler C."/>
            <person name="Glodek A."/>
            <person name="Gu Z."/>
            <person name="Jennings D."/>
            <person name="Kraft C.L."/>
            <person name="Nguyen T."/>
            <person name="Pfannkoch C.M."/>
            <person name="Sitter C."/>
            <person name="Sutton G.G."/>
            <person name="Venter J.C."/>
            <person name="Woodage T."/>
            <person name="Smith D."/>
            <person name="Lee H.-M."/>
            <person name="Gustafson E."/>
            <person name="Cahill P."/>
            <person name="Kana A."/>
            <person name="Doucette-Stamm L."/>
            <person name="Weinstock K."/>
            <person name="Fechtel K."/>
            <person name="Weiss R.B."/>
            <person name="Dunn D.M."/>
            <person name="Green E.D."/>
            <person name="Blakesley R.W."/>
            <person name="Bouffard G.G."/>
            <person name="De Jong P.J."/>
            <person name="Osoegawa K."/>
            <person name="Zhu B."/>
            <person name="Marra M."/>
            <person name="Schein J."/>
            <person name="Bosdet I."/>
            <person name="Fjell C."/>
            <person name="Jones S."/>
            <person name="Krzywinski M."/>
            <person name="Mathewson C."/>
            <person name="Siddiqui A."/>
            <person name="Wye N."/>
            <person name="McPherson J."/>
            <person name="Zhao S."/>
            <person name="Fraser C.M."/>
            <person name="Shetty J."/>
            <person name="Shatsman S."/>
            <person name="Geer K."/>
            <person name="Chen Y."/>
            <person name="Abramzon S."/>
            <person name="Nierman W.C."/>
            <person name="Havlak P.H."/>
            <person name="Chen R."/>
            <person name="Durbin K.J."/>
            <person name="Egan A."/>
            <person name="Ren Y."/>
            <person name="Song X.-Z."/>
            <person name="Li B."/>
            <person name="Liu Y."/>
            <person name="Qin X."/>
            <person name="Cawley S."/>
            <person name="Cooney A.J."/>
            <person name="D'Souza L.M."/>
            <person name="Martin K."/>
            <person name="Wu J.Q."/>
            <person name="Gonzalez-Garay M.L."/>
            <person name="Jackson A.R."/>
            <person name="Kalafus K.J."/>
            <person name="McLeod M.P."/>
            <person name="Milosavljevic A."/>
            <person name="Virk D."/>
            <person name="Volkov A."/>
            <person name="Wheeler D.A."/>
            <person name="Zhang Z."/>
            <person name="Bailey J.A."/>
            <person name="Eichler E.E."/>
            <person name="Tuzun E."/>
            <person name="Birney E."/>
            <person name="Mongin E."/>
            <person name="Ureta-Vidal A."/>
            <person name="Woodwark C."/>
            <person name="Zdobnov E."/>
            <person name="Bork P."/>
            <person name="Suyama M."/>
            <person name="Torrents D."/>
            <person name="Alexandersson M."/>
            <person name="Trask B.J."/>
            <person name="Young J.M."/>
            <person name="Huang H."/>
            <person name="Wang H."/>
            <person name="Xing H."/>
            <person name="Daniels S."/>
            <person name="Gietzen D."/>
            <person name="Schmidt J."/>
            <person name="Stevens K."/>
            <person name="Vitt U."/>
            <person name="Wingrove J."/>
            <person name="Camara F."/>
            <person name="Mar Alba M."/>
            <person name="Abril J.F."/>
            <person name="Guigo R."/>
            <person name="Smit A."/>
            <person name="Dubchak I."/>
            <person name="Rubin E.M."/>
            <person name="Couronne O."/>
            <person name="Poliakov A."/>
            <person name="Huebner N."/>
            <person name="Ganten D."/>
            <person name="Goesele C."/>
            <person name="Hummel O."/>
            <person name="Kreitler T."/>
            <person name="Lee Y.-A."/>
            <person name="Monti J."/>
            <person name="Schulz H."/>
            <person name="Zimdahl H."/>
            <person name="Himmelbauer H."/>
            <person name="Lehrach H."/>
            <person name="Jacob H.J."/>
            <person name="Bromberg S."/>
            <person name="Gullings-Handley J."/>
            <person name="Jensen-Seaman M.I."/>
            <person name="Kwitek A.E."/>
            <person name="Lazar J."/>
            <person name="Pasko D."/>
            <person name="Tonellato P.J."/>
            <person name="Twigger S."/>
            <person name="Ponting C.P."/>
            <person name="Duarte J.M."/>
            <person name="Rice S."/>
            <person name="Goodstadt L."/>
            <person name="Beatson S.A."/>
            <person name="Emes R.D."/>
            <person name="Winter E.E."/>
            <person name="Webber C."/>
            <person name="Brandt P."/>
            <person name="Nyakatura G."/>
            <person name="Adetobi M."/>
            <person name="Chiaromonte F."/>
            <person name="Elnitski L."/>
            <person name="Eswara P."/>
            <person name="Hardison R.C."/>
            <person name="Hou M."/>
            <person name="Kolbe D."/>
            <person name="Makova K."/>
            <person name="Miller W."/>
            <person name="Nekrutenko A."/>
            <person name="Riemer C."/>
            <person name="Schwartz S."/>
            <person name="Taylor J."/>
            <person name="Yang S."/>
            <person name="Zhang Y."/>
            <person name="Lindpaintner K."/>
            <person name="Andrews T.D."/>
            <person name="Caccamo M."/>
            <person name="Clamp M."/>
            <person name="Clarke L."/>
            <person name="Curwen V."/>
            <person name="Durbin R.M."/>
            <person name="Eyras E."/>
            <person name="Searle S.M."/>
            <person name="Cooper G.M."/>
            <person name="Batzoglou S."/>
            <person name="Brudno M."/>
            <person name="Sidow A."/>
            <person name="Stone E.A."/>
            <person name="Payseur B.A."/>
            <person name="Bourque G."/>
            <person name="Lopez-Otin C."/>
            <person name="Puente X.S."/>
            <person name="Chakrabarti K."/>
            <person name="Chatterji S."/>
            <person name="Dewey C."/>
            <person name="Pachter L."/>
            <person name="Bray N."/>
            <person name="Yap V.B."/>
            <person name="Caspi A."/>
            <person name="Tesler G."/>
            <person name="Pevzner P.A."/>
            <person name="Haussler D."/>
            <person name="Roskin K.M."/>
            <person name="Baertsch R."/>
            <person name="Clawson H."/>
            <person name="Furey T.S."/>
            <person name="Hinrichs A.S."/>
            <person name="Karolchik D."/>
            <person name="Kent W.J."/>
            <person name="Rosenbloom K.R."/>
            <person name="Trumbower H."/>
            <person name="Weirauch M."/>
            <person name="Cooper D.N."/>
            <person name="Stenson P.D."/>
            <person name="Ma B."/>
            <person name="Brent M."/>
            <person name="Arumugam M."/>
            <person name="Shteynberg D."/>
            <person name="Copley R.R."/>
            <person name="Taylor M.S."/>
            <person name="Riethman H."/>
            <person name="Mudunuri U."/>
            <person name="Peterson J."/>
            <person name="Guyer M."/>
            <person name="Felsenfeld A."/>
            <person name="Old S."/>
            <person name="Mockrin S."/>
            <person name="Collins F.S."/>
        </authorList>
    </citation>
    <scope>NUCLEOTIDE SEQUENCE [LARGE SCALE GENOMIC DNA]</scope>
    <source>
        <strain>Brown Norway</strain>
    </source>
</reference>
<reference key="2">
    <citation type="journal article" date="2004" name="Genome Res.">
        <title>The status, quality, and expansion of the NIH full-length cDNA project: the Mammalian Gene Collection (MGC).</title>
        <authorList>
            <consortium name="The MGC Project Team"/>
        </authorList>
    </citation>
    <scope>NUCLEOTIDE SEQUENCE [LARGE SCALE MRNA]</scope>
    <source>
        <tissue>Prostate</tissue>
    </source>
</reference>
<evidence type="ECO:0000250" key="1"/>
<evidence type="ECO:0000250" key="2">
    <source>
        <dbReference type="UniProtKB" id="Q6ZWT7"/>
    </source>
</evidence>
<evidence type="ECO:0000250" key="3">
    <source>
        <dbReference type="UniProtKB" id="Q8R3I2"/>
    </source>
</evidence>
<evidence type="ECO:0000255" key="4"/>
<evidence type="ECO:0000305" key="5"/>
<evidence type="ECO:0000312" key="6">
    <source>
        <dbReference type="RGD" id="1305798"/>
    </source>
</evidence>